<proteinExistence type="inferred from homology"/>
<comment type="function">
    <text evidence="1">Part of the ABC transporter complex YtfQRT-YjfF involved in galactofuranose transport. Responsible for energy coupling to the transport system.</text>
</comment>
<comment type="catalytic activity">
    <reaction evidence="1">
        <text>D-galactofuranose(out) + ATP + H2O = D-galactofuranose(in) + ADP + phosphate + H(+)</text>
        <dbReference type="Rhea" id="RHEA:61716"/>
        <dbReference type="ChEBI" id="CHEBI:15377"/>
        <dbReference type="ChEBI" id="CHEBI:15378"/>
        <dbReference type="ChEBI" id="CHEBI:30616"/>
        <dbReference type="ChEBI" id="CHEBI:43474"/>
        <dbReference type="ChEBI" id="CHEBI:143624"/>
        <dbReference type="ChEBI" id="CHEBI:456216"/>
        <dbReference type="EC" id="7.5.2.9"/>
    </reaction>
</comment>
<comment type="subunit">
    <text evidence="1">The complex is composed of two ATP-binding proteins (YtfR), two transmembrane proteins (YtfT and YjfF) and a solute-binding protein (YtfQ).</text>
</comment>
<comment type="subcellular location">
    <subcellularLocation>
        <location evidence="1">Cell inner membrane</location>
        <topology evidence="1">Peripheral membrane protein</topology>
    </subcellularLocation>
</comment>
<comment type="similarity">
    <text evidence="3">Belongs to the ABC transporter superfamily.</text>
</comment>
<protein>
    <recommendedName>
        <fullName evidence="1">Galactofuranose transporter ATP-binding protein YtfR</fullName>
        <ecNumber evidence="1">7.5.2.9</ecNumber>
    </recommendedName>
</protein>
<reference key="1">
    <citation type="journal article" date="2001" name="Nature">
        <title>Genome sequence of enterohaemorrhagic Escherichia coli O157:H7.</title>
        <authorList>
            <person name="Perna N.T."/>
            <person name="Plunkett G. III"/>
            <person name="Burland V."/>
            <person name="Mau B."/>
            <person name="Glasner J.D."/>
            <person name="Rose D.J."/>
            <person name="Mayhew G.F."/>
            <person name="Evans P.S."/>
            <person name="Gregor J."/>
            <person name="Kirkpatrick H.A."/>
            <person name="Posfai G."/>
            <person name="Hackett J."/>
            <person name="Klink S."/>
            <person name="Boutin A."/>
            <person name="Shao Y."/>
            <person name="Miller L."/>
            <person name="Grotbeck E.J."/>
            <person name="Davis N.W."/>
            <person name="Lim A."/>
            <person name="Dimalanta E.T."/>
            <person name="Potamousis K."/>
            <person name="Apodaca J."/>
            <person name="Anantharaman T.S."/>
            <person name="Lin J."/>
            <person name="Yen G."/>
            <person name="Schwartz D.C."/>
            <person name="Welch R.A."/>
            <person name="Blattner F.R."/>
        </authorList>
    </citation>
    <scope>NUCLEOTIDE SEQUENCE [LARGE SCALE GENOMIC DNA]</scope>
    <source>
        <strain>O157:H7 / EDL933 / ATCC 700927 / EHEC</strain>
    </source>
</reference>
<reference key="2">
    <citation type="journal article" date="2001" name="DNA Res.">
        <title>Complete genome sequence of enterohemorrhagic Escherichia coli O157:H7 and genomic comparison with a laboratory strain K-12.</title>
        <authorList>
            <person name="Hayashi T."/>
            <person name="Makino K."/>
            <person name="Ohnishi M."/>
            <person name="Kurokawa K."/>
            <person name="Ishii K."/>
            <person name="Yokoyama K."/>
            <person name="Han C.-G."/>
            <person name="Ohtsubo E."/>
            <person name="Nakayama K."/>
            <person name="Murata T."/>
            <person name="Tanaka M."/>
            <person name="Tobe T."/>
            <person name="Iida T."/>
            <person name="Takami H."/>
            <person name="Honda T."/>
            <person name="Sasakawa C."/>
            <person name="Ogasawara N."/>
            <person name="Yasunaga T."/>
            <person name="Kuhara S."/>
            <person name="Shiba T."/>
            <person name="Hattori M."/>
            <person name="Shinagawa H."/>
        </authorList>
    </citation>
    <scope>NUCLEOTIDE SEQUENCE [LARGE SCALE GENOMIC DNA]</scope>
    <source>
        <strain>O157:H7 / Sakai / RIMD 0509952 / EHEC</strain>
    </source>
</reference>
<gene>
    <name type="primary">ytfR</name>
    <name type="ordered locus">Z5839</name>
    <name type="ordered locus">ECs5206</name>
</gene>
<organism>
    <name type="scientific">Escherichia coli O157:H7</name>
    <dbReference type="NCBI Taxonomy" id="83334"/>
    <lineage>
        <taxon>Bacteria</taxon>
        <taxon>Pseudomonadati</taxon>
        <taxon>Pseudomonadota</taxon>
        <taxon>Gammaproteobacteria</taxon>
        <taxon>Enterobacterales</taxon>
        <taxon>Enterobacteriaceae</taxon>
        <taxon>Escherichia</taxon>
    </lineage>
</organism>
<evidence type="ECO:0000250" key="1">
    <source>
        <dbReference type="UniProtKB" id="Q6BEX0"/>
    </source>
</evidence>
<evidence type="ECO:0000255" key="2">
    <source>
        <dbReference type="PROSITE-ProRule" id="PRU00434"/>
    </source>
</evidence>
<evidence type="ECO:0000305" key="3"/>
<dbReference type="EC" id="7.5.2.9" evidence="1"/>
<dbReference type="EMBL" id="AE005174">
    <property type="protein sequence ID" value="AAG59426.1"/>
    <property type="molecule type" value="Genomic_DNA"/>
</dbReference>
<dbReference type="EMBL" id="BA000007">
    <property type="protein sequence ID" value="BAB38629.1"/>
    <property type="molecule type" value="Genomic_DNA"/>
</dbReference>
<dbReference type="PIR" id="F86120">
    <property type="entry name" value="F86120"/>
</dbReference>
<dbReference type="PIR" id="F91279">
    <property type="entry name" value="F91279"/>
</dbReference>
<dbReference type="RefSeq" id="NP_313233.1">
    <property type="nucleotide sequence ID" value="NC_002695.1"/>
</dbReference>
<dbReference type="RefSeq" id="WP_000205806.1">
    <property type="nucleotide sequence ID" value="NZ_VOAI01000023.1"/>
</dbReference>
<dbReference type="SMR" id="P63299"/>
<dbReference type="STRING" id="155864.Z5839"/>
<dbReference type="GeneID" id="913896"/>
<dbReference type="KEGG" id="ece:Z5839"/>
<dbReference type="KEGG" id="ecs:ECs_5206"/>
<dbReference type="PATRIC" id="fig|386585.9.peg.5442"/>
<dbReference type="eggNOG" id="COG1129">
    <property type="taxonomic scope" value="Bacteria"/>
</dbReference>
<dbReference type="HOGENOM" id="CLU_000604_92_3_6"/>
<dbReference type="Proteomes" id="UP000000558">
    <property type="component" value="Chromosome"/>
</dbReference>
<dbReference type="Proteomes" id="UP000002519">
    <property type="component" value="Chromosome"/>
</dbReference>
<dbReference type="GO" id="GO:0005886">
    <property type="term" value="C:plasma membrane"/>
    <property type="evidence" value="ECO:0007669"/>
    <property type="project" value="UniProtKB-SubCell"/>
</dbReference>
<dbReference type="GO" id="GO:0103116">
    <property type="term" value="F:ABC-type D-galactofuranose transporter"/>
    <property type="evidence" value="ECO:0007669"/>
    <property type="project" value="UniProtKB-EC"/>
</dbReference>
<dbReference type="GO" id="GO:0005524">
    <property type="term" value="F:ATP binding"/>
    <property type="evidence" value="ECO:0007669"/>
    <property type="project" value="UniProtKB-KW"/>
</dbReference>
<dbReference type="GO" id="GO:0016887">
    <property type="term" value="F:ATP hydrolysis activity"/>
    <property type="evidence" value="ECO:0007669"/>
    <property type="project" value="InterPro"/>
</dbReference>
<dbReference type="CDD" id="cd03216">
    <property type="entry name" value="ABC_Carb_Monos_I"/>
    <property type="match status" value="1"/>
</dbReference>
<dbReference type="CDD" id="cd03215">
    <property type="entry name" value="ABC_Carb_Monos_II"/>
    <property type="match status" value="1"/>
</dbReference>
<dbReference type="FunFam" id="3.40.50.300:FF:000127">
    <property type="entry name" value="Ribose import ATP-binding protein RbsA"/>
    <property type="match status" value="1"/>
</dbReference>
<dbReference type="Gene3D" id="3.40.50.300">
    <property type="entry name" value="P-loop containing nucleotide triphosphate hydrolases"/>
    <property type="match status" value="2"/>
</dbReference>
<dbReference type="InterPro" id="IPR003593">
    <property type="entry name" value="AAA+_ATPase"/>
</dbReference>
<dbReference type="InterPro" id="IPR050107">
    <property type="entry name" value="ABC_carbohydrate_import_ATPase"/>
</dbReference>
<dbReference type="InterPro" id="IPR003439">
    <property type="entry name" value="ABC_transporter-like_ATP-bd"/>
</dbReference>
<dbReference type="InterPro" id="IPR017871">
    <property type="entry name" value="ABC_transporter-like_CS"/>
</dbReference>
<dbReference type="InterPro" id="IPR027417">
    <property type="entry name" value="P-loop_NTPase"/>
</dbReference>
<dbReference type="InterPro" id="IPR049716">
    <property type="entry name" value="YtfR-like"/>
</dbReference>
<dbReference type="NCBIfam" id="NF041861">
    <property type="entry name" value="YtfR_transport"/>
    <property type="match status" value="1"/>
</dbReference>
<dbReference type="PANTHER" id="PTHR43790">
    <property type="entry name" value="CARBOHYDRATE TRANSPORT ATP-BINDING PROTEIN MG119-RELATED"/>
    <property type="match status" value="1"/>
</dbReference>
<dbReference type="PANTHER" id="PTHR43790:SF9">
    <property type="entry name" value="GALACTOFURANOSE TRANSPORTER ATP-BINDING PROTEIN YTFR"/>
    <property type="match status" value="1"/>
</dbReference>
<dbReference type="Pfam" id="PF00005">
    <property type="entry name" value="ABC_tran"/>
    <property type="match status" value="2"/>
</dbReference>
<dbReference type="SMART" id="SM00382">
    <property type="entry name" value="AAA"/>
    <property type="match status" value="2"/>
</dbReference>
<dbReference type="SUPFAM" id="SSF52540">
    <property type="entry name" value="P-loop containing nucleoside triphosphate hydrolases"/>
    <property type="match status" value="2"/>
</dbReference>
<dbReference type="PROSITE" id="PS00211">
    <property type="entry name" value="ABC_TRANSPORTER_1"/>
    <property type="match status" value="1"/>
</dbReference>
<dbReference type="PROSITE" id="PS50893">
    <property type="entry name" value="ABC_TRANSPORTER_2"/>
    <property type="match status" value="2"/>
</dbReference>
<name>YTFR_ECO57</name>
<accession>P63299</accession>
<accession>P39326</accession>
<accession>P39327</accession>
<feature type="chain" id="PRO_0000093176" description="Galactofuranose transporter ATP-binding protein YtfR">
    <location>
        <begin position="1"/>
        <end position="500"/>
    </location>
</feature>
<feature type="domain" description="ABC transporter 1" evidence="2">
    <location>
        <begin position="10"/>
        <end position="245"/>
    </location>
</feature>
<feature type="domain" description="ABC transporter 2" evidence="2">
    <location>
        <begin position="259"/>
        <end position="497"/>
    </location>
</feature>
<feature type="binding site" evidence="2">
    <location>
        <begin position="42"/>
        <end position="49"/>
    </location>
    <ligand>
        <name>ATP</name>
        <dbReference type="ChEBI" id="CHEBI:30616"/>
    </ligand>
</feature>
<keyword id="KW-0067">ATP-binding</keyword>
<keyword id="KW-0997">Cell inner membrane</keyword>
<keyword id="KW-1003">Cell membrane</keyword>
<keyword id="KW-0472">Membrane</keyword>
<keyword id="KW-0547">Nucleotide-binding</keyword>
<keyword id="KW-1185">Reference proteome</keyword>
<keyword id="KW-0677">Repeat</keyword>
<keyword id="KW-0762">Sugar transport</keyword>
<keyword id="KW-1278">Translocase</keyword>
<keyword id="KW-0813">Transport</keyword>
<sequence>MTTDQHQEILRTEGLSKFFPGVKALDNVDFSLRRGEIMALLGENGAGKSTLIKALTGVYHADRGTIWLEGQAISPKNTAHAQQLGIGTVYQEVNLLPNMSVADNLFIGREPKRFGLLRRKEMEKRATELMASYGFSLDVREPLNRFSVAMQQIVAICRAIDLSAKVLILDEPTASLDTQEVELLFDLMRQLRDRGVSLIFVTHFLDQVYQVSDRITVLRNGSFVGCRETCELPQIELVKMMLGRELDTHALQRAGRTLLSDKPVAAFKNYGKKGTIAPFDLEVRPGEIVGLAGLLGSGRTETAEVIFGIKPADSGTALIKGKPQNLRSPHQASVLGIGFCPEDRKTDGIIAAASVRENIILALQARRGWLRPISRKEQQEIAERFIRQLGIRTPSTEQPIEFLSGGNQQKVLLSRWLLTRPQFLILDEPTRGIDVGAHAEIIRLIETLCADGLALLVISSELEELVGYADRVIIMRDRKQVAEIPLAELSVPAIMNAIAA</sequence>